<proteinExistence type="predicted"/>
<keyword id="KW-1185">Reference proteome</keyword>
<reference key="1">
    <citation type="journal article" date="1990" name="Virology">
        <title>The complete DNA sequence of vaccinia virus.</title>
        <authorList>
            <person name="Goebel S.J."/>
            <person name="Johnson G.P."/>
            <person name="Perkus M.E."/>
            <person name="Davis S.W."/>
            <person name="Winslow J.P."/>
            <person name="Paoletti E."/>
        </authorList>
    </citation>
    <scope>NUCLEOTIDE SEQUENCE [LARGE SCALE GENOMIC DNA]</scope>
</reference>
<reference key="2">
    <citation type="journal article" date="1990" name="Virology">
        <title>Appendix to 'The complete DNA sequence of vaccinia virus'.</title>
        <authorList>
            <person name="Goebel S.J."/>
            <person name="Johnson G.P."/>
            <person name="Perkus M.E."/>
            <person name="Davis S.W."/>
            <person name="Winslow J.P."/>
            <person name="Paoletti E."/>
        </authorList>
    </citation>
    <scope>COMPLETE GENOME</scope>
</reference>
<protein>
    <recommendedName>
        <fullName>Uncharacterized 8.6 kDa protein</fullName>
    </recommendedName>
</protein>
<organismHost>
    <name type="scientific">Homo sapiens</name>
    <name type="common">Human</name>
    <dbReference type="NCBI Taxonomy" id="9606"/>
</organismHost>
<gene>
    <name type="ORF">A ORF M</name>
</gene>
<feature type="chain" id="PRO_0000099655" description="Uncharacterized 8.6 kDa protein">
    <location>
        <begin position="1"/>
        <end position="76"/>
    </location>
</feature>
<accession>P68626</accession>
<accession>P20522</accession>
<dbReference type="EMBL" id="M35027">
    <property type="protein sequence ID" value="AAA48162.1"/>
    <property type="molecule type" value="Genomic_DNA"/>
</dbReference>
<dbReference type="PIR" id="I42524">
    <property type="entry name" value="I42524"/>
</dbReference>
<dbReference type="Proteomes" id="UP000008269">
    <property type="component" value="Segment"/>
</dbReference>
<dbReference type="InterPro" id="IPR020125">
    <property type="entry name" value="DUF5488"/>
</dbReference>
<dbReference type="Pfam" id="PF17590">
    <property type="entry name" value="DUF5488"/>
    <property type="match status" value="1"/>
</dbReference>
<organism>
    <name type="scientific">Vaccinia virus (strain Copenhagen)</name>
    <name type="common">VACV</name>
    <dbReference type="NCBI Taxonomy" id="10249"/>
    <lineage>
        <taxon>Viruses</taxon>
        <taxon>Varidnaviria</taxon>
        <taxon>Bamfordvirae</taxon>
        <taxon>Nucleocytoviricota</taxon>
        <taxon>Pokkesviricetes</taxon>
        <taxon>Chitovirales</taxon>
        <taxon>Poxviridae</taxon>
        <taxon>Chordopoxvirinae</taxon>
        <taxon>Orthopoxvirus</taxon>
        <taxon>Vaccinia virus</taxon>
    </lineage>
</organism>
<name>YVAM_VACCC</name>
<sequence>MSEYFISRTSIWTVFMLPIMYGPIKSMIEISRSSYNVSVIVNTPIGVITNAASMAAYVNDLLLIHFLLSLVEFFNT</sequence>